<dbReference type="EMBL" id="CP001252">
    <property type="protein sequence ID" value="ACK48528.1"/>
    <property type="molecule type" value="Genomic_DNA"/>
</dbReference>
<dbReference type="RefSeq" id="WP_006083599.1">
    <property type="nucleotide sequence ID" value="NC_011663.1"/>
</dbReference>
<dbReference type="SMR" id="B8EBK4"/>
<dbReference type="GeneID" id="67441761"/>
<dbReference type="KEGG" id="sbp:Sbal223_4055"/>
<dbReference type="HOGENOM" id="CLU_041575_5_2_6"/>
<dbReference type="Proteomes" id="UP000002507">
    <property type="component" value="Chromosome"/>
</dbReference>
<dbReference type="GO" id="GO:1990904">
    <property type="term" value="C:ribonucleoprotein complex"/>
    <property type="evidence" value="ECO:0007669"/>
    <property type="project" value="UniProtKB-KW"/>
</dbReference>
<dbReference type="GO" id="GO:0005840">
    <property type="term" value="C:ribosome"/>
    <property type="evidence" value="ECO:0007669"/>
    <property type="project" value="UniProtKB-KW"/>
</dbReference>
<dbReference type="GO" id="GO:0019843">
    <property type="term" value="F:rRNA binding"/>
    <property type="evidence" value="ECO:0007669"/>
    <property type="project" value="UniProtKB-UniRule"/>
</dbReference>
<dbReference type="GO" id="GO:0003735">
    <property type="term" value="F:structural constituent of ribosome"/>
    <property type="evidence" value="ECO:0007669"/>
    <property type="project" value="InterPro"/>
</dbReference>
<dbReference type="GO" id="GO:0006412">
    <property type="term" value="P:translation"/>
    <property type="evidence" value="ECO:0007669"/>
    <property type="project" value="UniProtKB-UniRule"/>
</dbReference>
<dbReference type="FunFam" id="3.40.1370.10:FF:000001">
    <property type="entry name" value="50S ribosomal protein L4"/>
    <property type="match status" value="1"/>
</dbReference>
<dbReference type="Gene3D" id="3.40.1370.10">
    <property type="match status" value="1"/>
</dbReference>
<dbReference type="HAMAP" id="MF_01328_B">
    <property type="entry name" value="Ribosomal_uL4_B"/>
    <property type="match status" value="1"/>
</dbReference>
<dbReference type="InterPro" id="IPR002136">
    <property type="entry name" value="Ribosomal_uL4"/>
</dbReference>
<dbReference type="InterPro" id="IPR013005">
    <property type="entry name" value="Ribosomal_uL4-like"/>
</dbReference>
<dbReference type="InterPro" id="IPR023574">
    <property type="entry name" value="Ribosomal_uL4_dom_sf"/>
</dbReference>
<dbReference type="NCBIfam" id="TIGR03953">
    <property type="entry name" value="rplD_bact"/>
    <property type="match status" value="1"/>
</dbReference>
<dbReference type="PANTHER" id="PTHR10746">
    <property type="entry name" value="50S RIBOSOMAL PROTEIN L4"/>
    <property type="match status" value="1"/>
</dbReference>
<dbReference type="PANTHER" id="PTHR10746:SF6">
    <property type="entry name" value="LARGE RIBOSOMAL SUBUNIT PROTEIN UL4M"/>
    <property type="match status" value="1"/>
</dbReference>
<dbReference type="Pfam" id="PF00573">
    <property type="entry name" value="Ribosomal_L4"/>
    <property type="match status" value="1"/>
</dbReference>
<dbReference type="SUPFAM" id="SSF52166">
    <property type="entry name" value="Ribosomal protein L4"/>
    <property type="match status" value="1"/>
</dbReference>
<reference key="1">
    <citation type="submission" date="2008-12" db="EMBL/GenBank/DDBJ databases">
        <title>Complete sequence of chromosome of Shewanella baltica OS223.</title>
        <authorList>
            <consortium name="US DOE Joint Genome Institute"/>
            <person name="Lucas S."/>
            <person name="Copeland A."/>
            <person name="Lapidus A."/>
            <person name="Glavina del Rio T."/>
            <person name="Dalin E."/>
            <person name="Tice H."/>
            <person name="Bruce D."/>
            <person name="Goodwin L."/>
            <person name="Pitluck S."/>
            <person name="Chertkov O."/>
            <person name="Meincke L."/>
            <person name="Brettin T."/>
            <person name="Detter J.C."/>
            <person name="Han C."/>
            <person name="Kuske C.R."/>
            <person name="Larimer F."/>
            <person name="Land M."/>
            <person name="Hauser L."/>
            <person name="Kyrpides N."/>
            <person name="Ovchinnikova G."/>
            <person name="Brettar I."/>
            <person name="Rodrigues J."/>
            <person name="Konstantinidis K."/>
            <person name="Tiedje J."/>
        </authorList>
    </citation>
    <scope>NUCLEOTIDE SEQUENCE [LARGE SCALE GENOMIC DNA]</scope>
    <source>
        <strain>OS223</strain>
    </source>
</reference>
<proteinExistence type="inferred from homology"/>
<feature type="chain" id="PRO_1000166023" description="Large ribosomal subunit protein uL4">
    <location>
        <begin position="1"/>
        <end position="201"/>
    </location>
</feature>
<feature type="region of interest" description="Disordered" evidence="2">
    <location>
        <begin position="45"/>
        <end position="72"/>
    </location>
</feature>
<name>RL4_SHEB2</name>
<gene>
    <name evidence="1" type="primary">rplD</name>
    <name type="ordered locus">Sbal223_4055</name>
</gene>
<accession>B8EBK4</accession>
<comment type="function">
    <text evidence="1">One of the primary rRNA binding proteins, this protein initially binds near the 5'-end of the 23S rRNA. It is important during the early stages of 50S assembly. It makes multiple contacts with different domains of the 23S rRNA in the assembled 50S subunit and ribosome.</text>
</comment>
<comment type="function">
    <text evidence="1">Forms part of the polypeptide exit tunnel.</text>
</comment>
<comment type="subunit">
    <text evidence="1">Part of the 50S ribosomal subunit.</text>
</comment>
<comment type="similarity">
    <text evidence="1">Belongs to the universal ribosomal protein uL4 family.</text>
</comment>
<organism>
    <name type="scientific">Shewanella baltica (strain OS223)</name>
    <dbReference type="NCBI Taxonomy" id="407976"/>
    <lineage>
        <taxon>Bacteria</taxon>
        <taxon>Pseudomonadati</taxon>
        <taxon>Pseudomonadota</taxon>
        <taxon>Gammaproteobacteria</taxon>
        <taxon>Alteromonadales</taxon>
        <taxon>Shewanellaceae</taxon>
        <taxon>Shewanella</taxon>
    </lineage>
</organism>
<sequence length="201" mass="21979">MELVLKDAQSALEVSETTFGRDFNEALVHQVVVAYAANARQGTRAQKTRAEVTGSGKKPWRQKGTGRARAGSVKGPIWRGGGVTFAAKTQDHSQKVNKKMYRGALKSILSELVRQERLVVVESFGVEAPKTKELKAKLKAMNLEDVLIVTAEVDENLFLAARNLYKVDVRDVAGLDPVSLIAFNTVLVTADAVKQIEEMLA</sequence>
<keyword id="KW-0687">Ribonucleoprotein</keyword>
<keyword id="KW-0689">Ribosomal protein</keyword>
<keyword id="KW-0694">RNA-binding</keyword>
<keyword id="KW-0699">rRNA-binding</keyword>
<evidence type="ECO:0000255" key="1">
    <source>
        <dbReference type="HAMAP-Rule" id="MF_01328"/>
    </source>
</evidence>
<evidence type="ECO:0000256" key="2">
    <source>
        <dbReference type="SAM" id="MobiDB-lite"/>
    </source>
</evidence>
<evidence type="ECO:0000305" key="3"/>
<protein>
    <recommendedName>
        <fullName evidence="1">Large ribosomal subunit protein uL4</fullName>
    </recommendedName>
    <alternativeName>
        <fullName evidence="3">50S ribosomal protein L4</fullName>
    </alternativeName>
</protein>